<proteinExistence type="inferred from homology"/>
<feature type="chain" id="PRO_1000011710" description="GTPase Der">
    <location>
        <begin position="1"/>
        <end position="489"/>
    </location>
</feature>
<feature type="domain" description="EngA-type G 1">
    <location>
        <begin position="3"/>
        <end position="166"/>
    </location>
</feature>
<feature type="domain" description="EngA-type G 2">
    <location>
        <begin position="201"/>
        <end position="374"/>
    </location>
</feature>
<feature type="domain" description="KH-like" evidence="1">
    <location>
        <begin position="375"/>
        <end position="459"/>
    </location>
</feature>
<feature type="binding site" evidence="1">
    <location>
        <begin position="9"/>
        <end position="16"/>
    </location>
    <ligand>
        <name>GTP</name>
        <dbReference type="ChEBI" id="CHEBI:37565"/>
        <label>1</label>
    </ligand>
</feature>
<feature type="binding site" evidence="1">
    <location>
        <begin position="56"/>
        <end position="60"/>
    </location>
    <ligand>
        <name>GTP</name>
        <dbReference type="ChEBI" id="CHEBI:37565"/>
        <label>1</label>
    </ligand>
</feature>
<feature type="binding site" evidence="1">
    <location>
        <begin position="118"/>
        <end position="121"/>
    </location>
    <ligand>
        <name>GTP</name>
        <dbReference type="ChEBI" id="CHEBI:37565"/>
        <label>1</label>
    </ligand>
</feature>
<feature type="binding site" evidence="1">
    <location>
        <begin position="207"/>
        <end position="214"/>
    </location>
    <ligand>
        <name>GTP</name>
        <dbReference type="ChEBI" id="CHEBI:37565"/>
        <label>2</label>
    </ligand>
</feature>
<feature type="binding site" evidence="1">
    <location>
        <begin position="254"/>
        <end position="258"/>
    </location>
    <ligand>
        <name>GTP</name>
        <dbReference type="ChEBI" id="CHEBI:37565"/>
        <label>2</label>
    </ligand>
</feature>
<feature type="binding site" evidence="1">
    <location>
        <begin position="319"/>
        <end position="322"/>
    </location>
    <ligand>
        <name>GTP</name>
        <dbReference type="ChEBI" id="CHEBI:37565"/>
        <label>2</label>
    </ligand>
</feature>
<protein>
    <recommendedName>
        <fullName evidence="1">GTPase Der</fullName>
    </recommendedName>
    <alternativeName>
        <fullName evidence="1">GTP-binding protein EngA</fullName>
    </alternativeName>
</protein>
<comment type="function">
    <text evidence="1">GTPase that plays an essential role in the late steps of ribosome biogenesis.</text>
</comment>
<comment type="subunit">
    <text evidence="1">Associates with the 50S ribosomal subunit.</text>
</comment>
<comment type="similarity">
    <text evidence="1">Belongs to the TRAFAC class TrmE-Era-EngA-EngB-Septin-like GTPase superfamily. EngA (Der) GTPase family.</text>
</comment>
<accession>A1SU43</accession>
<keyword id="KW-0342">GTP-binding</keyword>
<keyword id="KW-0547">Nucleotide-binding</keyword>
<keyword id="KW-1185">Reference proteome</keyword>
<keyword id="KW-0677">Repeat</keyword>
<keyword id="KW-0690">Ribosome biogenesis</keyword>
<dbReference type="EMBL" id="CP000510">
    <property type="protein sequence ID" value="ABM03008.1"/>
    <property type="molecule type" value="Genomic_DNA"/>
</dbReference>
<dbReference type="RefSeq" id="WP_011769571.1">
    <property type="nucleotide sequence ID" value="NC_008709.1"/>
</dbReference>
<dbReference type="SMR" id="A1SU43"/>
<dbReference type="STRING" id="357804.Ping_1172"/>
<dbReference type="KEGG" id="pin:Ping_1172"/>
<dbReference type="eggNOG" id="COG1160">
    <property type="taxonomic scope" value="Bacteria"/>
</dbReference>
<dbReference type="HOGENOM" id="CLU_016077_6_2_6"/>
<dbReference type="OrthoDB" id="9805918at2"/>
<dbReference type="Proteomes" id="UP000000639">
    <property type="component" value="Chromosome"/>
</dbReference>
<dbReference type="GO" id="GO:0016887">
    <property type="term" value="F:ATP hydrolysis activity"/>
    <property type="evidence" value="ECO:0007669"/>
    <property type="project" value="InterPro"/>
</dbReference>
<dbReference type="GO" id="GO:0005525">
    <property type="term" value="F:GTP binding"/>
    <property type="evidence" value="ECO:0007669"/>
    <property type="project" value="UniProtKB-UniRule"/>
</dbReference>
<dbReference type="GO" id="GO:0043022">
    <property type="term" value="F:ribosome binding"/>
    <property type="evidence" value="ECO:0007669"/>
    <property type="project" value="TreeGrafter"/>
</dbReference>
<dbReference type="GO" id="GO:0042254">
    <property type="term" value="P:ribosome biogenesis"/>
    <property type="evidence" value="ECO:0007669"/>
    <property type="project" value="UniProtKB-KW"/>
</dbReference>
<dbReference type="CDD" id="cd01894">
    <property type="entry name" value="EngA1"/>
    <property type="match status" value="1"/>
</dbReference>
<dbReference type="CDD" id="cd01895">
    <property type="entry name" value="EngA2"/>
    <property type="match status" value="1"/>
</dbReference>
<dbReference type="FunFam" id="3.30.300.20:FF:000004">
    <property type="entry name" value="GTPase Der"/>
    <property type="match status" value="1"/>
</dbReference>
<dbReference type="FunFam" id="3.40.50.300:FF:000040">
    <property type="entry name" value="GTPase Der"/>
    <property type="match status" value="1"/>
</dbReference>
<dbReference type="FunFam" id="3.40.50.300:FF:000057">
    <property type="entry name" value="GTPase Der"/>
    <property type="match status" value="1"/>
</dbReference>
<dbReference type="Gene3D" id="3.30.300.20">
    <property type="match status" value="1"/>
</dbReference>
<dbReference type="Gene3D" id="3.40.50.300">
    <property type="entry name" value="P-loop containing nucleotide triphosphate hydrolases"/>
    <property type="match status" value="2"/>
</dbReference>
<dbReference type="HAMAP" id="MF_00195">
    <property type="entry name" value="GTPase_Der"/>
    <property type="match status" value="1"/>
</dbReference>
<dbReference type="InterPro" id="IPR003593">
    <property type="entry name" value="AAA+_ATPase"/>
</dbReference>
<dbReference type="InterPro" id="IPR031166">
    <property type="entry name" value="G_ENGA"/>
</dbReference>
<dbReference type="InterPro" id="IPR006073">
    <property type="entry name" value="GTP-bd"/>
</dbReference>
<dbReference type="InterPro" id="IPR016484">
    <property type="entry name" value="GTPase_Der"/>
</dbReference>
<dbReference type="InterPro" id="IPR032859">
    <property type="entry name" value="KH_dom-like"/>
</dbReference>
<dbReference type="InterPro" id="IPR015946">
    <property type="entry name" value="KH_dom-like_a/b"/>
</dbReference>
<dbReference type="InterPro" id="IPR027417">
    <property type="entry name" value="P-loop_NTPase"/>
</dbReference>
<dbReference type="InterPro" id="IPR005225">
    <property type="entry name" value="Small_GTP-bd"/>
</dbReference>
<dbReference type="NCBIfam" id="TIGR03594">
    <property type="entry name" value="GTPase_EngA"/>
    <property type="match status" value="1"/>
</dbReference>
<dbReference type="NCBIfam" id="TIGR00231">
    <property type="entry name" value="small_GTP"/>
    <property type="match status" value="2"/>
</dbReference>
<dbReference type="PANTHER" id="PTHR43834">
    <property type="entry name" value="GTPASE DER"/>
    <property type="match status" value="1"/>
</dbReference>
<dbReference type="PANTHER" id="PTHR43834:SF6">
    <property type="entry name" value="GTPASE DER"/>
    <property type="match status" value="1"/>
</dbReference>
<dbReference type="Pfam" id="PF14714">
    <property type="entry name" value="KH_dom-like"/>
    <property type="match status" value="1"/>
</dbReference>
<dbReference type="Pfam" id="PF01926">
    <property type="entry name" value="MMR_HSR1"/>
    <property type="match status" value="2"/>
</dbReference>
<dbReference type="PIRSF" id="PIRSF006485">
    <property type="entry name" value="GTP-binding_EngA"/>
    <property type="match status" value="1"/>
</dbReference>
<dbReference type="PRINTS" id="PR00326">
    <property type="entry name" value="GTP1OBG"/>
</dbReference>
<dbReference type="SMART" id="SM00382">
    <property type="entry name" value="AAA"/>
    <property type="match status" value="2"/>
</dbReference>
<dbReference type="SUPFAM" id="SSF52540">
    <property type="entry name" value="P-loop containing nucleoside triphosphate hydrolases"/>
    <property type="match status" value="2"/>
</dbReference>
<dbReference type="PROSITE" id="PS51712">
    <property type="entry name" value="G_ENGA"/>
    <property type="match status" value="2"/>
</dbReference>
<name>DER_PSYIN</name>
<organism>
    <name type="scientific">Psychromonas ingrahamii (strain DSM 17664 / CCUG 51855 / 37)</name>
    <dbReference type="NCBI Taxonomy" id="357804"/>
    <lineage>
        <taxon>Bacteria</taxon>
        <taxon>Pseudomonadati</taxon>
        <taxon>Pseudomonadota</taxon>
        <taxon>Gammaproteobacteria</taxon>
        <taxon>Alteromonadales</taxon>
        <taxon>Psychromonadaceae</taxon>
        <taxon>Psychromonas</taxon>
    </lineage>
</organism>
<gene>
    <name evidence="1" type="primary">der</name>
    <name type="synonym">engA</name>
    <name type="ordered locus">Ping_1172</name>
</gene>
<reference key="1">
    <citation type="journal article" date="2008" name="BMC Genomics">
        <title>Genomics of an extreme psychrophile, Psychromonas ingrahamii.</title>
        <authorList>
            <person name="Riley M."/>
            <person name="Staley J.T."/>
            <person name="Danchin A."/>
            <person name="Wang T.Z."/>
            <person name="Brettin T.S."/>
            <person name="Hauser L.J."/>
            <person name="Land M.L."/>
            <person name="Thompson L.S."/>
        </authorList>
    </citation>
    <scope>NUCLEOTIDE SEQUENCE [LARGE SCALE GENOMIC DNA]</scope>
    <source>
        <strain>DSM 17664 / CCUG 51855 / 37</strain>
    </source>
</reference>
<sequence>MLPVVALVGRPNVGKSTLFNRLTRTRDALVADFPGLTRDRKYGQAKIDEHEFIVIDTGGITGDEEGIDALMAGQSLLAIDEADAVLFLVDARAGMTIADEAIADHLRKQDKKVFVVANKTDGVDADSVCAEFYALGLGEVYHIAAAQGKGVRQMIEIALDGFFDDVEQEDDFSDLETGLEFVEEDEALLLKEQERLAALPIKLALIGRPNVGKSTLTNRILGEERVLVYDLPGTTRDSIYIPMSRDDREYILIDTAGVRKRKKVNETVEKFSVIKTLQAIEDCNVVLLIIDARDGISDQDLSLLGFTLNAGRSLVIAVNKWDGMTEYDKERVKSELDRRLGFIDFAKIHFISALHGTGVGHLYESVEEAYDSSTKRISTSILTRIMTMAAADHEPPMVGSRRVKLRYAHAGGYNPPLIVIHGNQVKKLADSYKRYLMNYFRRSLGIMGTPIRIEFREGTNPFAGRRNKLTPNQMYKRQRLVKFHKKSKK</sequence>
<evidence type="ECO:0000255" key="1">
    <source>
        <dbReference type="HAMAP-Rule" id="MF_00195"/>
    </source>
</evidence>